<feature type="initiator methionine" description="Removed" evidence="4">
    <location>
        <position position="1"/>
    </location>
</feature>
<feature type="chain" id="PRO_0000395523" description="Peptide methionine sulfoxide reductase B5">
    <location>
        <begin position="2"/>
        <end position="139"/>
    </location>
</feature>
<feature type="domain" description="MsrB" evidence="2">
    <location>
        <begin position="12"/>
        <end position="133"/>
    </location>
</feature>
<feature type="active site" description="Nucleophile" evidence="2">
    <location>
        <position position="122"/>
    </location>
</feature>
<feature type="binding site" evidence="2">
    <location>
        <position position="51"/>
    </location>
    <ligand>
        <name>Zn(2+)</name>
        <dbReference type="ChEBI" id="CHEBI:29105"/>
    </ligand>
</feature>
<feature type="binding site" evidence="2">
    <location>
        <position position="54"/>
    </location>
    <ligand>
        <name>Zn(2+)</name>
        <dbReference type="ChEBI" id="CHEBI:29105"/>
    </ligand>
</feature>
<feature type="binding site" evidence="2">
    <location>
        <position position="97"/>
    </location>
    <ligand>
        <name>Zn(2+)</name>
        <dbReference type="ChEBI" id="CHEBI:29105"/>
    </ligand>
</feature>
<feature type="binding site" evidence="2">
    <location>
        <position position="100"/>
    </location>
    <ligand>
        <name>Zn(2+)</name>
        <dbReference type="ChEBI" id="CHEBI:29105"/>
    </ligand>
</feature>
<feature type="modified residue" description="N-acetylalanine" evidence="4">
    <location>
        <position position="2"/>
    </location>
</feature>
<feature type="disulfide bond" description="Redox-active" evidence="1">
    <location>
        <begin position="69"/>
        <end position="122"/>
    </location>
</feature>
<comment type="function">
    <text evidence="1">Catalyzes the reduction of methionine sulfoxide (MetSO) to methionine in proteins. Plays a protective role against oxidative stress by restoring activity to proteins that have been inactivated by methionine oxidation. MSRB family specifically reduces the MetSO R-enantiomer (By similarity).</text>
</comment>
<comment type="catalytic activity">
    <reaction>
        <text>L-methionyl-[protein] + [thioredoxin]-disulfide + H2O = L-methionyl-(R)-S-oxide-[protein] + [thioredoxin]-dithiol</text>
        <dbReference type="Rhea" id="RHEA:24164"/>
        <dbReference type="Rhea" id="RHEA-COMP:10698"/>
        <dbReference type="Rhea" id="RHEA-COMP:10700"/>
        <dbReference type="Rhea" id="RHEA-COMP:12313"/>
        <dbReference type="Rhea" id="RHEA-COMP:12314"/>
        <dbReference type="ChEBI" id="CHEBI:15377"/>
        <dbReference type="ChEBI" id="CHEBI:16044"/>
        <dbReference type="ChEBI" id="CHEBI:29950"/>
        <dbReference type="ChEBI" id="CHEBI:45764"/>
        <dbReference type="ChEBI" id="CHEBI:50058"/>
        <dbReference type="EC" id="1.8.4.12"/>
    </reaction>
</comment>
<comment type="cofactor">
    <cofactor evidence="1">
        <name>Zn(2+)</name>
        <dbReference type="ChEBI" id="CHEBI:29105"/>
    </cofactor>
    <text evidence="1">Binds 1 zinc ion per subunit.</text>
</comment>
<comment type="subcellular location">
    <subcellularLocation>
        <location evidence="3">Cytoplasm</location>
        <location evidence="3">Cytosol</location>
    </subcellularLocation>
</comment>
<comment type="alternative products">
    <event type="alternative splicing"/>
    <isoform>
        <id>Q9ZS91-1</id>
        <name>1</name>
        <sequence type="displayed"/>
    </isoform>
    <text>A number of isoforms are produced. According to EST sequences.</text>
</comment>
<comment type="similarity">
    <text evidence="3">Belongs to the MsrB Met sulfoxide reductase family.</text>
</comment>
<proteinExistence type="evidence at protein level"/>
<keyword id="KW-0007">Acetylation</keyword>
<keyword id="KW-0025">Alternative splicing</keyword>
<keyword id="KW-0963">Cytoplasm</keyword>
<keyword id="KW-1015">Disulfide bond</keyword>
<keyword id="KW-0249">Electron transport</keyword>
<keyword id="KW-0479">Metal-binding</keyword>
<keyword id="KW-0560">Oxidoreductase</keyword>
<keyword id="KW-0676">Redox-active center</keyword>
<keyword id="KW-1185">Reference proteome</keyword>
<keyword id="KW-0813">Transport</keyword>
<keyword id="KW-0862">Zinc</keyword>
<organism>
    <name type="scientific">Arabidopsis thaliana</name>
    <name type="common">Mouse-ear cress</name>
    <dbReference type="NCBI Taxonomy" id="3702"/>
    <lineage>
        <taxon>Eukaryota</taxon>
        <taxon>Viridiplantae</taxon>
        <taxon>Streptophyta</taxon>
        <taxon>Embryophyta</taxon>
        <taxon>Tracheophyta</taxon>
        <taxon>Spermatophyta</taxon>
        <taxon>Magnoliopsida</taxon>
        <taxon>eudicotyledons</taxon>
        <taxon>Gunneridae</taxon>
        <taxon>Pentapetalae</taxon>
        <taxon>rosids</taxon>
        <taxon>malvids</taxon>
        <taxon>Brassicales</taxon>
        <taxon>Brassicaceae</taxon>
        <taxon>Camelineae</taxon>
        <taxon>Arabidopsis</taxon>
    </lineage>
</organism>
<dbReference type="EC" id="1.8.4.12"/>
<dbReference type="EMBL" id="AF118223">
    <property type="protein sequence ID" value="AAD03444.1"/>
    <property type="molecule type" value="Genomic_DNA"/>
</dbReference>
<dbReference type="EMBL" id="AL161501">
    <property type="protein sequence ID" value="CAB80848.1"/>
    <property type="molecule type" value="Genomic_DNA"/>
</dbReference>
<dbReference type="EMBL" id="CP002687">
    <property type="protein sequence ID" value="AEE82429.1"/>
    <property type="molecule type" value="Genomic_DNA"/>
</dbReference>
<dbReference type="EMBL" id="AY059946">
    <property type="protein sequence ID" value="AAL24428.1"/>
    <property type="molecule type" value="mRNA"/>
</dbReference>
<dbReference type="EMBL" id="AY081609">
    <property type="protein sequence ID" value="AAM10171.1"/>
    <property type="molecule type" value="mRNA"/>
</dbReference>
<dbReference type="EMBL" id="AY088697">
    <property type="protein sequence ID" value="AAM67017.1"/>
    <property type="molecule type" value="mRNA"/>
</dbReference>
<dbReference type="PIR" id="G85060">
    <property type="entry name" value="G85060"/>
</dbReference>
<dbReference type="RefSeq" id="NP_192392.1">
    <molecule id="Q9ZS91-1"/>
    <property type="nucleotide sequence ID" value="NM_116721.4"/>
</dbReference>
<dbReference type="SMR" id="Q9ZS91"/>
<dbReference type="BioGRID" id="11131">
    <property type="interactions" value="2"/>
</dbReference>
<dbReference type="FunCoup" id="Q9ZS91">
    <property type="interactions" value="137"/>
</dbReference>
<dbReference type="STRING" id="3702.Q9ZS91"/>
<dbReference type="iPTMnet" id="Q9ZS91"/>
<dbReference type="PaxDb" id="3702-AT4G04830.1"/>
<dbReference type="ProteomicsDB" id="250962">
    <molecule id="Q9ZS91-1"/>
</dbReference>
<dbReference type="EnsemblPlants" id="AT4G04830.1">
    <molecule id="Q9ZS91-1"/>
    <property type="protein sequence ID" value="AT4G04830.1"/>
    <property type="gene ID" value="AT4G04830"/>
</dbReference>
<dbReference type="GeneID" id="825820"/>
<dbReference type="Gramene" id="AT4G04830.1">
    <molecule id="Q9ZS91-1"/>
    <property type="protein sequence ID" value="AT4G04830.1"/>
    <property type="gene ID" value="AT4G04830"/>
</dbReference>
<dbReference type="KEGG" id="ath:AT4G04830"/>
<dbReference type="Araport" id="AT4G04830"/>
<dbReference type="TAIR" id="AT4G04830">
    <property type="gene designation" value="MSRB5"/>
</dbReference>
<dbReference type="eggNOG" id="KOG0856">
    <property type="taxonomic scope" value="Eukaryota"/>
</dbReference>
<dbReference type="HOGENOM" id="CLU_031040_8_5_1"/>
<dbReference type="InParanoid" id="Q9ZS91"/>
<dbReference type="OMA" id="AKTDAQW"/>
<dbReference type="OrthoDB" id="44061at2759"/>
<dbReference type="PhylomeDB" id="Q9ZS91"/>
<dbReference type="PRO" id="PR:Q9ZS91"/>
<dbReference type="Proteomes" id="UP000006548">
    <property type="component" value="Chromosome 4"/>
</dbReference>
<dbReference type="ExpressionAtlas" id="Q9ZS91">
    <property type="expression patterns" value="baseline and differential"/>
</dbReference>
<dbReference type="GO" id="GO:0005829">
    <property type="term" value="C:cytosol"/>
    <property type="evidence" value="ECO:0007669"/>
    <property type="project" value="UniProtKB-SubCell"/>
</dbReference>
<dbReference type="GO" id="GO:0046872">
    <property type="term" value="F:metal ion binding"/>
    <property type="evidence" value="ECO:0007669"/>
    <property type="project" value="UniProtKB-KW"/>
</dbReference>
<dbReference type="GO" id="GO:0033743">
    <property type="term" value="F:peptide-methionine (R)-S-oxide reductase activity"/>
    <property type="evidence" value="ECO:0007669"/>
    <property type="project" value="UniProtKB-EC"/>
</dbReference>
<dbReference type="GO" id="GO:0030091">
    <property type="term" value="P:protein repair"/>
    <property type="evidence" value="ECO:0007669"/>
    <property type="project" value="InterPro"/>
</dbReference>
<dbReference type="GO" id="GO:0006979">
    <property type="term" value="P:response to oxidative stress"/>
    <property type="evidence" value="ECO:0007669"/>
    <property type="project" value="InterPro"/>
</dbReference>
<dbReference type="FunFam" id="2.170.150.20:FF:000009">
    <property type="entry name" value="Peptide-methionine (R)-S-oxide reductase"/>
    <property type="match status" value="1"/>
</dbReference>
<dbReference type="Gene3D" id="2.170.150.20">
    <property type="entry name" value="Peptide methionine sulfoxide reductase"/>
    <property type="match status" value="1"/>
</dbReference>
<dbReference type="InterPro" id="IPR028427">
    <property type="entry name" value="Met_Sox_Rdtase_MsrB"/>
</dbReference>
<dbReference type="InterPro" id="IPR002579">
    <property type="entry name" value="Met_Sox_Rdtase_MsrB_dom"/>
</dbReference>
<dbReference type="InterPro" id="IPR011057">
    <property type="entry name" value="Mss4-like_sf"/>
</dbReference>
<dbReference type="NCBIfam" id="TIGR00357">
    <property type="entry name" value="peptide-methionine (R)-S-oxide reductase MsrB"/>
    <property type="match status" value="1"/>
</dbReference>
<dbReference type="PANTHER" id="PTHR46081">
    <property type="entry name" value="PEPTIDE METHIONINE SULFOXIDE REDUCTASE 2"/>
    <property type="match status" value="1"/>
</dbReference>
<dbReference type="PANTHER" id="PTHR46081:SF11">
    <property type="entry name" value="PEPTIDE METHIONINE SULFOXIDE REDUCTASE B4-RELATED"/>
    <property type="match status" value="1"/>
</dbReference>
<dbReference type="Pfam" id="PF01641">
    <property type="entry name" value="SelR"/>
    <property type="match status" value="1"/>
</dbReference>
<dbReference type="SUPFAM" id="SSF51316">
    <property type="entry name" value="Mss4-like"/>
    <property type="match status" value="1"/>
</dbReference>
<dbReference type="PROSITE" id="PS51790">
    <property type="entry name" value="MSRB"/>
    <property type="match status" value="1"/>
</dbReference>
<gene>
    <name type="primary">MSRB5</name>
    <name type="ordered locus">At4g04830</name>
    <name type="ORF">T4B21.5</name>
</gene>
<protein>
    <recommendedName>
        <fullName>Peptide methionine sulfoxide reductase B5</fullName>
        <shortName>AtMSRB5</shortName>
        <ecNumber>1.8.4.12</ecNumber>
    </recommendedName>
    <alternativeName>
        <fullName>Peptide-methionine (R)-S-oxide reductase</fullName>
    </alternativeName>
</protein>
<name>MSRB5_ARATH</name>
<accession>Q9ZS91</accession>
<evidence type="ECO:0000250" key="1"/>
<evidence type="ECO:0000255" key="2">
    <source>
        <dbReference type="PROSITE-ProRule" id="PRU01126"/>
    </source>
</evidence>
<evidence type="ECO:0000305" key="3"/>
<evidence type="ECO:0007744" key="4">
    <source>
    </source>
</evidence>
<sequence>MAASPLVVQKTEEEWRAVLSPEQFRILRQKGTEKPGTGEYDKFFEEGIFDCVGCKTPLYKSTTKFDSGCGWPAFFEGLPGAINRTPDPDGRRTEITCAACDGHLGHVFKGEGYGNPTDERHCVNSVSISFNPAKSSSII</sequence>
<reference key="1">
    <citation type="journal article" date="1999" name="Nature">
        <title>Sequence and analysis of chromosome 4 of the plant Arabidopsis thaliana.</title>
        <authorList>
            <person name="Mayer K.F.X."/>
            <person name="Schueller C."/>
            <person name="Wambutt R."/>
            <person name="Murphy G."/>
            <person name="Volckaert G."/>
            <person name="Pohl T."/>
            <person name="Duesterhoeft A."/>
            <person name="Stiekema W."/>
            <person name="Entian K.-D."/>
            <person name="Terryn N."/>
            <person name="Harris B."/>
            <person name="Ansorge W."/>
            <person name="Brandt P."/>
            <person name="Grivell L.A."/>
            <person name="Rieger M."/>
            <person name="Weichselgartner M."/>
            <person name="de Simone V."/>
            <person name="Obermaier B."/>
            <person name="Mache R."/>
            <person name="Mueller M."/>
            <person name="Kreis M."/>
            <person name="Delseny M."/>
            <person name="Puigdomenech P."/>
            <person name="Watson M."/>
            <person name="Schmidtheini T."/>
            <person name="Reichert B."/>
            <person name="Portetelle D."/>
            <person name="Perez-Alonso M."/>
            <person name="Boutry M."/>
            <person name="Bancroft I."/>
            <person name="Vos P."/>
            <person name="Hoheisel J."/>
            <person name="Zimmermann W."/>
            <person name="Wedler H."/>
            <person name="Ridley P."/>
            <person name="Langham S.-A."/>
            <person name="McCullagh B."/>
            <person name="Bilham L."/>
            <person name="Robben J."/>
            <person name="van der Schueren J."/>
            <person name="Grymonprez B."/>
            <person name="Chuang Y.-J."/>
            <person name="Vandenbussche F."/>
            <person name="Braeken M."/>
            <person name="Weltjens I."/>
            <person name="Voet M."/>
            <person name="Bastiaens I."/>
            <person name="Aert R."/>
            <person name="Defoor E."/>
            <person name="Weitzenegger T."/>
            <person name="Bothe G."/>
            <person name="Ramsperger U."/>
            <person name="Hilbert H."/>
            <person name="Braun M."/>
            <person name="Holzer E."/>
            <person name="Brandt A."/>
            <person name="Peters S."/>
            <person name="van Staveren M."/>
            <person name="Dirkse W."/>
            <person name="Mooijman P."/>
            <person name="Klein Lankhorst R."/>
            <person name="Rose M."/>
            <person name="Hauf J."/>
            <person name="Koetter P."/>
            <person name="Berneiser S."/>
            <person name="Hempel S."/>
            <person name="Feldpausch M."/>
            <person name="Lamberth S."/>
            <person name="Van den Daele H."/>
            <person name="De Keyser A."/>
            <person name="Buysshaert C."/>
            <person name="Gielen J."/>
            <person name="Villarroel R."/>
            <person name="De Clercq R."/>
            <person name="van Montagu M."/>
            <person name="Rogers J."/>
            <person name="Cronin A."/>
            <person name="Quail M.A."/>
            <person name="Bray-Allen S."/>
            <person name="Clark L."/>
            <person name="Doggett J."/>
            <person name="Hall S."/>
            <person name="Kay M."/>
            <person name="Lennard N."/>
            <person name="McLay K."/>
            <person name="Mayes R."/>
            <person name="Pettett A."/>
            <person name="Rajandream M.A."/>
            <person name="Lyne M."/>
            <person name="Benes V."/>
            <person name="Rechmann S."/>
            <person name="Borkova D."/>
            <person name="Bloecker H."/>
            <person name="Scharfe M."/>
            <person name="Grimm M."/>
            <person name="Loehnert T.-H."/>
            <person name="Dose S."/>
            <person name="de Haan M."/>
            <person name="Maarse A.C."/>
            <person name="Schaefer M."/>
            <person name="Mueller-Auer S."/>
            <person name="Gabel C."/>
            <person name="Fuchs M."/>
            <person name="Fartmann B."/>
            <person name="Granderath K."/>
            <person name="Dauner D."/>
            <person name="Herzl A."/>
            <person name="Neumann S."/>
            <person name="Argiriou A."/>
            <person name="Vitale D."/>
            <person name="Liguori R."/>
            <person name="Piravandi E."/>
            <person name="Massenet O."/>
            <person name="Quigley F."/>
            <person name="Clabauld G."/>
            <person name="Muendlein A."/>
            <person name="Felber R."/>
            <person name="Schnabl S."/>
            <person name="Hiller R."/>
            <person name="Schmidt W."/>
            <person name="Lecharny A."/>
            <person name="Aubourg S."/>
            <person name="Chefdor F."/>
            <person name="Cooke R."/>
            <person name="Berger C."/>
            <person name="Monfort A."/>
            <person name="Casacuberta E."/>
            <person name="Gibbons T."/>
            <person name="Weber N."/>
            <person name="Vandenbol M."/>
            <person name="Bargues M."/>
            <person name="Terol J."/>
            <person name="Torres A."/>
            <person name="Perez-Perez A."/>
            <person name="Purnelle B."/>
            <person name="Bent E."/>
            <person name="Johnson S."/>
            <person name="Tacon D."/>
            <person name="Jesse T."/>
            <person name="Heijnen L."/>
            <person name="Schwarz S."/>
            <person name="Scholler P."/>
            <person name="Heber S."/>
            <person name="Francs P."/>
            <person name="Bielke C."/>
            <person name="Frishman D."/>
            <person name="Haase D."/>
            <person name="Lemcke K."/>
            <person name="Mewes H.-W."/>
            <person name="Stocker S."/>
            <person name="Zaccaria P."/>
            <person name="Bevan M."/>
            <person name="Wilson R.K."/>
            <person name="de la Bastide M."/>
            <person name="Habermann K."/>
            <person name="Parnell L."/>
            <person name="Dedhia N."/>
            <person name="Gnoj L."/>
            <person name="Schutz K."/>
            <person name="Huang E."/>
            <person name="Spiegel L."/>
            <person name="Sekhon M."/>
            <person name="Murray J."/>
            <person name="Sheet P."/>
            <person name="Cordes M."/>
            <person name="Abu-Threideh J."/>
            <person name="Stoneking T."/>
            <person name="Kalicki J."/>
            <person name="Graves T."/>
            <person name="Harmon G."/>
            <person name="Edwards J."/>
            <person name="Latreille P."/>
            <person name="Courtney L."/>
            <person name="Cloud J."/>
            <person name="Abbott A."/>
            <person name="Scott K."/>
            <person name="Johnson D."/>
            <person name="Minx P."/>
            <person name="Bentley D."/>
            <person name="Fulton B."/>
            <person name="Miller N."/>
            <person name="Greco T."/>
            <person name="Kemp K."/>
            <person name="Kramer J."/>
            <person name="Fulton L."/>
            <person name="Mardis E."/>
            <person name="Dante M."/>
            <person name="Pepin K."/>
            <person name="Hillier L.W."/>
            <person name="Nelson J."/>
            <person name="Spieth J."/>
            <person name="Ryan E."/>
            <person name="Andrews S."/>
            <person name="Geisel C."/>
            <person name="Layman D."/>
            <person name="Du H."/>
            <person name="Ali J."/>
            <person name="Berghoff A."/>
            <person name="Jones K."/>
            <person name="Drone K."/>
            <person name="Cotton M."/>
            <person name="Joshu C."/>
            <person name="Antonoiu B."/>
            <person name="Zidanic M."/>
            <person name="Strong C."/>
            <person name="Sun H."/>
            <person name="Lamar B."/>
            <person name="Yordan C."/>
            <person name="Ma P."/>
            <person name="Zhong J."/>
            <person name="Preston R."/>
            <person name="Vil D."/>
            <person name="Shekher M."/>
            <person name="Matero A."/>
            <person name="Shah R."/>
            <person name="Swaby I.K."/>
            <person name="O'Shaughnessy A."/>
            <person name="Rodriguez M."/>
            <person name="Hoffman J."/>
            <person name="Till S."/>
            <person name="Granat S."/>
            <person name="Shohdy N."/>
            <person name="Hasegawa A."/>
            <person name="Hameed A."/>
            <person name="Lodhi M."/>
            <person name="Johnson A."/>
            <person name="Chen E."/>
            <person name="Marra M.A."/>
            <person name="Martienssen R."/>
            <person name="McCombie W.R."/>
        </authorList>
    </citation>
    <scope>NUCLEOTIDE SEQUENCE [LARGE SCALE GENOMIC DNA]</scope>
    <source>
        <strain>cv. Columbia</strain>
    </source>
</reference>
<reference key="2">
    <citation type="journal article" date="2017" name="Plant J.">
        <title>Araport11: a complete reannotation of the Arabidopsis thaliana reference genome.</title>
        <authorList>
            <person name="Cheng C.Y."/>
            <person name="Krishnakumar V."/>
            <person name="Chan A.P."/>
            <person name="Thibaud-Nissen F."/>
            <person name="Schobel S."/>
            <person name="Town C.D."/>
        </authorList>
    </citation>
    <scope>GENOME REANNOTATION</scope>
    <source>
        <strain>cv. Columbia</strain>
    </source>
</reference>
<reference key="3">
    <citation type="journal article" date="2003" name="Science">
        <title>Empirical analysis of transcriptional activity in the Arabidopsis genome.</title>
        <authorList>
            <person name="Yamada K."/>
            <person name="Lim J."/>
            <person name="Dale J.M."/>
            <person name="Chen H."/>
            <person name="Shinn P."/>
            <person name="Palm C.J."/>
            <person name="Southwick A.M."/>
            <person name="Wu H.C."/>
            <person name="Kim C.J."/>
            <person name="Nguyen M."/>
            <person name="Pham P.K."/>
            <person name="Cheuk R.F."/>
            <person name="Karlin-Newmann G."/>
            <person name="Liu S.X."/>
            <person name="Lam B."/>
            <person name="Sakano H."/>
            <person name="Wu T."/>
            <person name="Yu G."/>
            <person name="Miranda M."/>
            <person name="Quach H.L."/>
            <person name="Tripp M."/>
            <person name="Chang C.H."/>
            <person name="Lee J.M."/>
            <person name="Toriumi M.J."/>
            <person name="Chan M.M."/>
            <person name="Tang C.C."/>
            <person name="Onodera C.S."/>
            <person name="Deng J.M."/>
            <person name="Akiyama K."/>
            <person name="Ansari Y."/>
            <person name="Arakawa T."/>
            <person name="Banh J."/>
            <person name="Banno F."/>
            <person name="Bowser L."/>
            <person name="Brooks S.Y."/>
            <person name="Carninci P."/>
            <person name="Chao Q."/>
            <person name="Choy N."/>
            <person name="Enju A."/>
            <person name="Goldsmith A.D."/>
            <person name="Gurjal M."/>
            <person name="Hansen N.F."/>
            <person name="Hayashizaki Y."/>
            <person name="Johnson-Hopson C."/>
            <person name="Hsuan V.W."/>
            <person name="Iida K."/>
            <person name="Karnes M."/>
            <person name="Khan S."/>
            <person name="Koesema E."/>
            <person name="Ishida J."/>
            <person name="Jiang P.X."/>
            <person name="Jones T."/>
            <person name="Kawai J."/>
            <person name="Kamiya A."/>
            <person name="Meyers C."/>
            <person name="Nakajima M."/>
            <person name="Narusaka M."/>
            <person name="Seki M."/>
            <person name="Sakurai T."/>
            <person name="Satou M."/>
            <person name="Tamse R."/>
            <person name="Vaysberg M."/>
            <person name="Wallender E.K."/>
            <person name="Wong C."/>
            <person name="Yamamura Y."/>
            <person name="Yuan S."/>
            <person name="Shinozaki K."/>
            <person name="Davis R.W."/>
            <person name="Theologis A."/>
            <person name="Ecker J.R."/>
        </authorList>
    </citation>
    <scope>NUCLEOTIDE SEQUENCE [LARGE SCALE MRNA]</scope>
    <source>
        <strain>cv. Columbia</strain>
    </source>
</reference>
<reference key="4">
    <citation type="submission" date="2002-03" db="EMBL/GenBank/DDBJ databases">
        <title>Full-length cDNA from Arabidopsis thaliana.</title>
        <authorList>
            <person name="Brover V.V."/>
            <person name="Troukhan M.E."/>
            <person name="Alexandrov N.A."/>
            <person name="Lu Y.-P."/>
            <person name="Flavell R.B."/>
            <person name="Feldmann K.A."/>
        </authorList>
    </citation>
    <scope>NUCLEOTIDE SEQUENCE [LARGE SCALE MRNA]</scope>
</reference>
<reference key="5">
    <citation type="journal article" date="2006" name="Photosyn. Res.">
        <title>Plant methionine sulfoxide reductase A and B multigenic families.</title>
        <authorList>
            <person name="Rouhier N."/>
            <person name="Vieira Dos Santos C."/>
            <person name="Tarrago L."/>
            <person name="Rey P."/>
        </authorList>
    </citation>
    <scope>GENE FAMILY</scope>
    <scope>NOMENCLATURE</scope>
</reference>
<reference key="6">
    <citation type="journal article" date="2012" name="Mol. Cell. Proteomics">
        <title>Comparative large-scale characterisation of plant vs. mammal proteins reveals similar and idiosyncratic N-alpha acetylation features.</title>
        <authorList>
            <person name="Bienvenut W.V."/>
            <person name="Sumpton D."/>
            <person name="Martinez A."/>
            <person name="Lilla S."/>
            <person name="Espagne C."/>
            <person name="Meinnel T."/>
            <person name="Giglione C."/>
        </authorList>
    </citation>
    <scope>ACETYLATION [LARGE SCALE ANALYSIS] AT ALA-2</scope>
    <scope>CLEAVAGE OF INITIATOR METHIONINE [LARGE SCALE ANALYSIS]</scope>
    <scope>IDENTIFICATION BY MASS SPECTROMETRY [LARGE SCALE ANALYSIS]</scope>
</reference>